<dbReference type="EC" id="6.3.4.5" evidence="1"/>
<dbReference type="EMBL" id="BA000003">
    <property type="protein sequence ID" value="BAB12773.1"/>
    <property type="molecule type" value="Genomic_DNA"/>
</dbReference>
<dbReference type="RefSeq" id="NP_239887.1">
    <property type="nucleotide sequence ID" value="NC_002528.1"/>
</dbReference>
<dbReference type="RefSeq" id="WP_009874007.1">
    <property type="nucleotide sequence ID" value="NZ_AP036055.1"/>
</dbReference>
<dbReference type="SMR" id="P57158"/>
<dbReference type="STRING" id="563178.BUAP5A_049"/>
<dbReference type="EnsemblBacteria" id="BAB12773">
    <property type="protein sequence ID" value="BAB12773"/>
    <property type="gene ID" value="BAB12773"/>
</dbReference>
<dbReference type="KEGG" id="buc:BU050"/>
<dbReference type="PATRIC" id="fig|107806.10.peg.59"/>
<dbReference type="eggNOG" id="COG0137">
    <property type="taxonomic scope" value="Bacteria"/>
</dbReference>
<dbReference type="HOGENOM" id="CLU_032784_4_2_6"/>
<dbReference type="UniPathway" id="UPA00068">
    <property type="reaction ID" value="UER00113"/>
</dbReference>
<dbReference type="Proteomes" id="UP000001806">
    <property type="component" value="Chromosome"/>
</dbReference>
<dbReference type="GO" id="GO:0005737">
    <property type="term" value="C:cytoplasm"/>
    <property type="evidence" value="ECO:0007669"/>
    <property type="project" value="UniProtKB-SubCell"/>
</dbReference>
<dbReference type="GO" id="GO:0004055">
    <property type="term" value="F:argininosuccinate synthase activity"/>
    <property type="evidence" value="ECO:0007669"/>
    <property type="project" value="UniProtKB-UniRule"/>
</dbReference>
<dbReference type="GO" id="GO:0005524">
    <property type="term" value="F:ATP binding"/>
    <property type="evidence" value="ECO:0007669"/>
    <property type="project" value="UniProtKB-UniRule"/>
</dbReference>
<dbReference type="GO" id="GO:0000053">
    <property type="term" value="P:argininosuccinate metabolic process"/>
    <property type="evidence" value="ECO:0007669"/>
    <property type="project" value="TreeGrafter"/>
</dbReference>
<dbReference type="GO" id="GO:0006526">
    <property type="term" value="P:L-arginine biosynthetic process"/>
    <property type="evidence" value="ECO:0007669"/>
    <property type="project" value="UniProtKB-UniRule"/>
</dbReference>
<dbReference type="GO" id="GO:0000050">
    <property type="term" value="P:urea cycle"/>
    <property type="evidence" value="ECO:0007669"/>
    <property type="project" value="TreeGrafter"/>
</dbReference>
<dbReference type="CDD" id="cd01999">
    <property type="entry name" value="ASS"/>
    <property type="match status" value="1"/>
</dbReference>
<dbReference type="FunFam" id="3.40.50.620:FF:000019">
    <property type="entry name" value="Argininosuccinate synthase"/>
    <property type="match status" value="1"/>
</dbReference>
<dbReference type="FunFam" id="3.90.1260.10:FF:000007">
    <property type="entry name" value="Argininosuccinate synthase"/>
    <property type="match status" value="1"/>
</dbReference>
<dbReference type="Gene3D" id="3.90.1260.10">
    <property type="entry name" value="Argininosuccinate synthetase, chain A, domain 2"/>
    <property type="match status" value="1"/>
</dbReference>
<dbReference type="Gene3D" id="3.40.50.620">
    <property type="entry name" value="HUPs"/>
    <property type="match status" value="1"/>
</dbReference>
<dbReference type="Gene3D" id="1.20.5.470">
    <property type="entry name" value="Single helix bin"/>
    <property type="match status" value="1"/>
</dbReference>
<dbReference type="HAMAP" id="MF_00005">
    <property type="entry name" value="Arg_succ_synth_type1"/>
    <property type="match status" value="1"/>
</dbReference>
<dbReference type="InterPro" id="IPR048268">
    <property type="entry name" value="Arginosuc_syn_C"/>
</dbReference>
<dbReference type="InterPro" id="IPR048267">
    <property type="entry name" value="Arginosuc_syn_N"/>
</dbReference>
<dbReference type="InterPro" id="IPR001518">
    <property type="entry name" value="Arginosuc_synth"/>
</dbReference>
<dbReference type="InterPro" id="IPR018223">
    <property type="entry name" value="Arginosuc_synth_CS"/>
</dbReference>
<dbReference type="InterPro" id="IPR023434">
    <property type="entry name" value="Arginosuc_synth_type_1_subfam"/>
</dbReference>
<dbReference type="InterPro" id="IPR024074">
    <property type="entry name" value="AS_cat/multimer_dom_body"/>
</dbReference>
<dbReference type="InterPro" id="IPR014729">
    <property type="entry name" value="Rossmann-like_a/b/a_fold"/>
</dbReference>
<dbReference type="NCBIfam" id="TIGR00032">
    <property type="entry name" value="argG"/>
    <property type="match status" value="1"/>
</dbReference>
<dbReference type="NCBIfam" id="NF001770">
    <property type="entry name" value="PRK00509.1"/>
    <property type="match status" value="1"/>
</dbReference>
<dbReference type="PANTHER" id="PTHR11587">
    <property type="entry name" value="ARGININOSUCCINATE SYNTHASE"/>
    <property type="match status" value="1"/>
</dbReference>
<dbReference type="PANTHER" id="PTHR11587:SF2">
    <property type="entry name" value="ARGININOSUCCINATE SYNTHASE"/>
    <property type="match status" value="1"/>
</dbReference>
<dbReference type="Pfam" id="PF20979">
    <property type="entry name" value="Arginosuc_syn_C"/>
    <property type="match status" value="1"/>
</dbReference>
<dbReference type="Pfam" id="PF00764">
    <property type="entry name" value="Arginosuc_synth"/>
    <property type="match status" value="1"/>
</dbReference>
<dbReference type="SUPFAM" id="SSF52402">
    <property type="entry name" value="Adenine nucleotide alpha hydrolases-like"/>
    <property type="match status" value="1"/>
</dbReference>
<dbReference type="SUPFAM" id="SSF69864">
    <property type="entry name" value="Argininosuccinate synthetase, C-terminal domain"/>
    <property type="match status" value="1"/>
</dbReference>
<dbReference type="PROSITE" id="PS00564">
    <property type="entry name" value="ARGININOSUCCIN_SYN_1"/>
    <property type="match status" value="1"/>
</dbReference>
<dbReference type="PROSITE" id="PS00565">
    <property type="entry name" value="ARGININOSUCCIN_SYN_2"/>
    <property type="match status" value="1"/>
</dbReference>
<feature type="chain" id="PRO_0000148576" description="Argininosuccinate synthase">
    <location>
        <begin position="1"/>
        <end position="403"/>
    </location>
</feature>
<feature type="binding site" evidence="1">
    <location>
        <begin position="12"/>
        <end position="20"/>
    </location>
    <ligand>
        <name>ATP</name>
        <dbReference type="ChEBI" id="CHEBI:30616"/>
    </ligand>
</feature>
<feature type="binding site" evidence="1">
    <location>
        <position position="39"/>
    </location>
    <ligand>
        <name>ATP</name>
        <dbReference type="ChEBI" id="CHEBI:30616"/>
    </ligand>
</feature>
<feature type="binding site" evidence="1">
    <location>
        <position position="91"/>
    </location>
    <ligand>
        <name>L-citrulline</name>
        <dbReference type="ChEBI" id="CHEBI:57743"/>
    </ligand>
</feature>
<feature type="binding site" evidence="1">
    <location>
        <position position="121"/>
    </location>
    <ligand>
        <name>ATP</name>
        <dbReference type="ChEBI" id="CHEBI:30616"/>
    </ligand>
</feature>
<feature type="binding site" evidence="1">
    <location>
        <position position="123"/>
    </location>
    <ligand>
        <name>L-aspartate</name>
        <dbReference type="ChEBI" id="CHEBI:29991"/>
    </ligand>
</feature>
<feature type="binding site" evidence="1">
    <location>
        <position position="127"/>
    </location>
    <ligand>
        <name>L-aspartate</name>
        <dbReference type="ChEBI" id="CHEBI:29991"/>
    </ligand>
</feature>
<feature type="binding site" evidence="1">
    <location>
        <position position="127"/>
    </location>
    <ligand>
        <name>L-citrulline</name>
        <dbReference type="ChEBI" id="CHEBI:57743"/>
    </ligand>
</feature>
<feature type="binding site" evidence="1">
    <location>
        <position position="128"/>
    </location>
    <ligand>
        <name>L-aspartate</name>
        <dbReference type="ChEBI" id="CHEBI:29991"/>
    </ligand>
</feature>
<feature type="binding site" evidence="1">
    <location>
        <position position="131"/>
    </location>
    <ligand>
        <name>L-citrulline</name>
        <dbReference type="ChEBI" id="CHEBI:57743"/>
    </ligand>
</feature>
<feature type="binding site" evidence="1">
    <location>
        <position position="180"/>
    </location>
    <ligand>
        <name>L-citrulline</name>
        <dbReference type="ChEBI" id="CHEBI:57743"/>
    </ligand>
</feature>
<feature type="binding site" evidence="1">
    <location>
        <position position="189"/>
    </location>
    <ligand>
        <name>L-citrulline</name>
        <dbReference type="ChEBI" id="CHEBI:57743"/>
    </ligand>
</feature>
<feature type="binding site" evidence="1">
    <location>
        <position position="265"/>
    </location>
    <ligand>
        <name>L-citrulline</name>
        <dbReference type="ChEBI" id="CHEBI:57743"/>
    </ligand>
</feature>
<feature type="binding site" evidence="1">
    <location>
        <position position="277"/>
    </location>
    <ligand>
        <name>L-citrulline</name>
        <dbReference type="ChEBI" id="CHEBI:57743"/>
    </ligand>
</feature>
<proteinExistence type="inferred from homology"/>
<gene>
    <name evidence="1" type="primary">argG</name>
    <name type="ordered locus">BU050</name>
</gene>
<accession>P57158</accession>
<protein>
    <recommendedName>
        <fullName evidence="1">Argininosuccinate synthase</fullName>
        <ecNumber evidence="1">6.3.4.5</ecNumber>
    </recommendedName>
    <alternativeName>
        <fullName evidence="1">Citrulline--aspartate ligase</fullName>
    </alternativeName>
</protein>
<organism>
    <name type="scientific">Buchnera aphidicola subsp. Acyrthosiphon pisum (strain APS)</name>
    <name type="common">Acyrthosiphon pisum symbiotic bacterium</name>
    <dbReference type="NCBI Taxonomy" id="107806"/>
    <lineage>
        <taxon>Bacteria</taxon>
        <taxon>Pseudomonadati</taxon>
        <taxon>Pseudomonadota</taxon>
        <taxon>Gammaproteobacteria</taxon>
        <taxon>Enterobacterales</taxon>
        <taxon>Erwiniaceae</taxon>
        <taxon>Buchnera</taxon>
    </lineage>
</organism>
<comment type="catalytic activity">
    <reaction evidence="1">
        <text>L-citrulline + L-aspartate + ATP = 2-(N(omega)-L-arginino)succinate + AMP + diphosphate + H(+)</text>
        <dbReference type="Rhea" id="RHEA:10932"/>
        <dbReference type="ChEBI" id="CHEBI:15378"/>
        <dbReference type="ChEBI" id="CHEBI:29991"/>
        <dbReference type="ChEBI" id="CHEBI:30616"/>
        <dbReference type="ChEBI" id="CHEBI:33019"/>
        <dbReference type="ChEBI" id="CHEBI:57472"/>
        <dbReference type="ChEBI" id="CHEBI:57743"/>
        <dbReference type="ChEBI" id="CHEBI:456215"/>
        <dbReference type="EC" id="6.3.4.5"/>
    </reaction>
</comment>
<comment type="pathway">
    <text evidence="1">Amino-acid biosynthesis; L-arginine biosynthesis; L-arginine from L-ornithine and carbamoyl phosphate: step 2/3.</text>
</comment>
<comment type="subunit">
    <text evidence="1">Homotetramer.</text>
</comment>
<comment type="subcellular location">
    <subcellularLocation>
        <location evidence="1">Cytoplasm</location>
    </subcellularLocation>
</comment>
<comment type="similarity">
    <text evidence="1">Belongs to the argininosuccinate synthase family. Type 1 subfamily.</text>
</comment>
<sequence length="403" mass="45073">MIRKKNNKVVLAYSGGLDTSAIIPWLKENYNFEVVAFVADIGQSKKDLNGIEKKSLESGASSCHVFDLKEEFIENYVYPVLKTGALYEGSYLLGTAMARPIIAKKQVELALNIGANSLCHGATGKGNDQVRFEMAYAALAPNLNVIAPWREWNLNSRESLLKYLDKKNISTTATLEKIYSKDENSWHISTEGGLLENPWNQSNEDCWSWTVNPEDAPEKPEYVSLQLKEGCVVSVNNQKLNPLKCVEELNSLGAKHGIGRIDIIENRLIGMKSRGCYETPGGTIIMTAIKAIEQLVLDRESFRWREKIGLEMSSIVYDGRWFSPIRKSLQAAADSLSLEITGEVILKLYKGSVTAVQKKSPNSLYSEEYATFGEDKVYKQSDADGFIRLFSLSSKIRAQNMLK</sequence>
<reference key="1">
    <citation type="journal article" date="2000" name="Nature">
        <title>Genome sequence of the endocellular bacterial symbiont of aphids Buchnera sp. APS.</title>
        <authorList>
            <person name="Shigenobu S."/>
            <person name="Watanabe H."/>
            <person name="Hattori M."/>
            <person name="Sakaki Y."/>
            <person name="Ishikawa H."/>
        </authorList>
    </citation>
    <scope>NUCLEOTIDE SEQUENCE [LARGE SCALE GENOMIC DNA]</scope>
    <source>
        <strain>APS</strain>
    </source>
</reference>
<evidence type="ECO:0000255" key="1">
    <source>
        <dbReference type="HAMAP-Rule" id="MF_00005"/>
    </source>
</evidence>
<keyword id="KW-0028">Amino-acid biosynthesis</keyword>
<keyword id="KW-0055">Arginine biosynthesis</keyword>
<keyword id="KW-0067">ATP-binding</keyword>
<keyword id="KW-0963">Cytoplasm</keyword>
<keyword id="KW-0436">Ligase</keyword>
<keyword id="KW-0547">Nucleotide-binding</keyword>
<keyword id="KW-1185">Reference proteome</keyword>
<name>ASSY_BUCAI</name>